<sequence length="374" mass="40580">MGSKVSVEESVRVVIVGGGFAGIAAATQLKSFGIPFVLVDLKDAFHHNVAALRASVESGFARKTFISYKDTFQDNFIQGKVVGINLQTQRVILESNEELQFSHLIIATGSNGPFPGKINNVISKDQAIQVYEDLVKEIQKAKHVVVVGGGSAGVEMAAEVKTDYPEKEVTLVHSKVALADVQLQPKVRRTVKEILLSKGVRLILAQKVTNLDQVTSNVAQENTVLQLDKNSEVVTCDLVLCCTGYKISSSSYSSAFGDKLAEDGALIVNDYLQVQGHANVYAVGDCAYINEPKMAYYAGIHARVAATNVRNSLIGKSLKTYKPGALSMLLSMGRNDGVGQFNGCYLGRFFVTMAKSRDIFVSKSWKEMGQTMPR</sequence>
<proteinExistence type="evidence at transcript level"/>
<feature type="initiator methionine" description="Removed" evidence="2">
    <location>
        <position position="1"/>
    </location>
</feature>
<feature type="chain" id="PRO_0000366946" description="Ferroptosis suppressor protein 1">
    <location>
        <begin position="2"/>
        <end position="374"/>
    </location>
</feature>
<feature type="transmembrane region" description="Helical" evidence="3">
    <location>
        <begin position="13"/>
        <end position="35"/>
    </location>
</feature>
<feature type="binding site" evidence="3">
    <location>
        <begin position="17"/>
        <end position="21"/>
    </location>
    <ligand>
        <name>6-hydroxy-FAD</name>
        <dbReference type="ChEBI" id="CHEBI:60470"/>
    </ligand>
</feature>
<feature type="binding site" evidence="3">
    <location>
        <position position="53"/>
    </location>
    <ligand>
        <name>6-hydroxy-FAD</name>
        <dbReference type="ChEBI" id="CHEBI:60470"/>
    </ligand>
</feature>
<feature type="binding site" evidence="3">
    <location>
        <position position="81"/>
    </location>
    <ligand>
        <name>6-hydroxy-FAD</name>
        <dbReference type="ChEBI" id="CHEBI:60470"/>
    </ligand>
</feature>
<feature type="binding site" evidence="3">
    <location>
        <position position="285"/>
    </location>
    <ligand>
        <name>6-hydroxy-FAD</name>
        <dbReference type="ChEBI" id="CHEBI:60470"/>
    </ligand>
</feature>
<feature type="site" description="4-hydroxy-2-nonenal adduction" evidence="1">
    <location>
        <position position="173"/>
    </location>
</feature>
<feature type="modified residue" description="N6-acetyllysine" evidence="2">
    <location>
        <position position="167"/>
    </location>
</feature>
<feature type="lipid moiety-binding region" description="N-myristoyl glycine" evidence="2">
    <location>
        <position position="2"/>
    </location>
</feature>
<accession>B4F6I3</accession>
<dbReference type="EC" id="1.6.5.-" evidence="2"/>
<dbReference type="EMBL" id="BC167890">
    <property type="protein sequence ID" value="AAI67890.1"/>
    <property type="molecule type" value="mRNA"/>
</dbReference>
<dbReference type="RefSeq" id="NP_001135491.1">
    <property type="nucleotide sequence ID" value="NM_001142019.2"/>
</dbReference>
<dbReference type="RefSeq" id="XP_017950783.1">
    <property type="nucleotide sequence ID" value="XM_018095294.2"/>
</dbReference>
<dbReference type="SMR" id="B4F6I3"/>
<dbReference type="FunCoup" id="B4F6I3">
    <property type="interactions" value="586"/>
</dbReference>
<dbReference type="STRING" id="8364.ENSXETP00000024377"/>
<dbReference type="PaxDb" id="8364-ENSXETP00000037399"/>
<dbReference type="GeneID" id="100216030"/>
<dbReference type="KEGG" id="xtr:100216030"/>
<dbReference type="AGR" id="Xenbase:XB-GENE-1003376"/>
<dbReference type="CTD" id="84883"/>
<dbReference type="Xenbase" id="XB-GENE-1003376">
    <property type="gene designation" value="aifm2"/>
</dbReference>
<dbReference type="eggNOG" id="KOG1336">
    <property type="taxonomic scope" value="Eukaryota"/>
</dbReference>
<dbReference type="HOGENOM" id="CLU_019845_2_1_1"/>
<dbReference type="InParanoid" id="B4F6I3"/>
<dbReference type="OMA" id="TWEIAPP"/>
<dbReference type="OrthoDB" id="3244603at2759"/>
<dbReference type="PhylomeDB" id="B4F6I3"/>
<dbReference type="TreeFam" id="TF329369"/>
<dbReference type="Proteomes" id="UP000008143">
    <property type="component" value="Chromosome 7"/>
</dbReference>
<dbReference type="Bgee" id="ENSXETG00000017152">
    <property type="expression patterns" value="Expressed in embryo and 11 other cell types or tissues"/>
</dbReference>
<dbReference type="ExpressionAtlas" id="B4F6I3">
    <property type="expression patterns" value="baseline and differential"/>
</dbReference>
<dbReference type="GO" id="GO:0005811">
    <property type="term" value="C:lipid droplet"/>
    <property type="evidence" value="ECO:0007669"/>
    <property type="project" value="UniProtKB-SubCell"/>
</dbReference>
<dbReference type="GO" id="GO:0031966">
    <property type="term" value="C:mitochondrial membrane"/>
    <property type="evidence" value="ECO:0007669"/>
    <property type="project" value="UniProtKB-SubCell"/>
</dbReference>
<dbReference type="GO" id="GO:0005634">
    <property type="term" value="C:nucleus"/>
    <property type="evidence" value="ECO:0007669"/>
    <property type="project" value="UniProtKB-SubCell"/>
</dbReference>
<dbReference type="GO" id="GO:0005886">
    <property type="term" value="C:plasma membrane"/>
    <property type="evidence" value="ECO:0007669"/>
    <property type="project" value="UniProtKB-SubCell"/>
</dbReference>
<dbReference type="GO" id="GO:0016655">
    <property type="term" value="F:oxidoreductase activity, acting on NAD(P)H, quinone or similar compound as acceptor"/>
    <property type="evidence" value="ECO:0000250"/>
    <property type="project" value="UniProtKB"/>
</dbReference>
<dbReference type="GO" id="GO:0006915">
    <property type="term" value="P:apoptotic process"/>
    <property type="evidence" value="ECO:0007669"/>
    <property type="project" value="UniProtKB-KW"/>
</dbReference>
<dbReference type="GO" id="GO:0042373">
    <property type="term" value="P:vitamin K metabolic process"/>
    <property type="evidence" value="ECO:0000250"/>
    <property type="project" value="UniProtKB"/>
</dbReference>
<dbReference type="FunFam" id="3.50.50.100:FF:000003">
    <property type="entry name" value="Apoptosis-inducing factor, mitochondrion-associated, 2"/>
    <property type="match status" value="1"/>
</dbReference>
<dbReference type="Gene3D" id="3.50.50.100">
    <property type="match status" value="1"/>
</dbReference>
<dbReference type="InterPro" id="IPR036188">
    <property type="entry name" value="FAD/NAD-bd_sf"/>
</dbReference>
<dbReference type="InterPro" id="IPR023753">
    <property type="entry name" value="FAD/NAD-binding_dom"/>
</dbReference>
<dbReference type="PANTHER" id="PTHR43735">
    <property type="entry name" value="APOPTOSIS-INDUCING FACTOR 1"/>
    <property type="match status" value="1"/>
</dbReference>
<dbReference type="PANTHER" id="PTHR43735:SF3">
    <property type="entry name" value="FERROPTOSIS SUPPRESSOR PROTEIN 1"/>
    <property type="match status" value="1"/>
</dbReference>
<dbReference type="Pfam" id="PF07992">
    <property type="entry name" value="Pyr_redox_2"/>
    <property type="match status" value="1"/>
</dbReference>
<dbReference type="PRINTS" id="PR00368">
    <property type="entry name" value="FADPNR"/>
</dbReference>
<dbReference type="PRINTS" id="PR00469">
    <property type="entry name" value="PNDRDTASEII"/>
</dbReference>
<dbReference type="SUPFAM" id="SSF51905">
    <property type="entry name" value="FAD/NAD(P)-binding domain"/>
    <property type="match status" value="1"/>
</dbReference>
<keyword id="KW-0007">Acetylation</keyword>
<keyword id="KW-0053">Apoptosis</keyword>
<keyword id="KW-1003">Cell membrane</keyword>
<keyword id="KW-0963">Cytoplasm</keyword>
<keyword id="KW-0274">FAD</keyword>
<keyword id="KW-0285">Flavoprotein</keyword>
<keyword id="KW-0551">Lipid droplet</keyword>
<keyword id="KW-0449">Lipoprotein</keyword>
<keyword id="KW-0472">Membrane</keyword>
<keyword id="KW-0496">Mitochondrion</keyword>
<keyword id="KW-0519">Myristate</keyword>
<keyword id="KW-0539">Nucleus</keyword>
<keyword id="KW-0560">Oxidoreductase</keyword>
<keyword id="KW-1185">Reference proteome</keyword>
<keyword id="KW-0812">Transmembrane</keyword>
<keyword id="KW-1133">Transmembrane helix</keyword>
<keyword id="KW-0832">Ubl conjugation</keyword>
<protein>
    <recommendedName>
        <fullName evidence="2">Ferroptosis suppressor protein 1</fullName>
        <shortName evidence="2">FSP1</shortName>
        <ecNumber evidence="2">1.6.5.-</ecNumber>
    </recommendedName>
    <alternativeName>
        <fullName>Apoptosis-inducing factor homologous mitochondrion-associated inducer of death</fullName>
        <shortName>AMID</shortName>
    </alternativeName>
    <alternativeName>
        <fullName>p53-responsive gene 3 protein</fullName>
    </alternativeName>
</protein>
<name>FSP1_XENTR</name>
<gene>
    <name type="primary">aifm2</name>
</gene>
<reference key="1">
    <citation type="submission" date="2008-07" db="EMBL/GenBank/DDBJ databases">
        <authorList>
            <consortium name="NIH - Xenopus Gene Collection (XGC) project"/>
        </authorList>
    </citation>
    <scope>NUCLEOTIDE SEQUENCE [LARGE SCALE MRNA]</scope>
    <source>
        <tissue>Embryo</tissue>
    </source>
</reference>
<organism>
    <name type="scientific">Xenopus tropicalis</name>
    <name type="common">Western clawed frog</name>
    <name type="synonym">Silurana tropicalis</name>
    <dbReference type="NCBI Taxonomy" id="8364"/>
    <lineage>
        <taxon>Eukaryota</taxon>
        <taxon>Metazoa</taxon>
        <taxon>Chordata</taxon>
        <taxon>Craniata</taxon>
        <taxon>Vertebrata</taxon>
        <taxon>Euteleostomi</taxon>
        <taxon>Amphibia</taxon>
        <taxon>Batrachia</taxon>
        <taxon>Anura</taxon>
        <taxon>Pipoidea</taxon>
        <taxon>Pipidae</taxon>
        <taxon>Xenopodinae</taxon>
        <taxon>Xenopus</taxon>
        <taxon>Silurana</taxon>
    </lineage>
</organism>
<comment type="function">
    <text evidence="2">A NAD(P)H-dependent oxidoreductase that acts as a key inhibitor of ferroptosis. At the plasma membrane, catalyzes reduction of coenzyme Q/ubiquinone-10 to ubiquinol-10, a lipophilic radical-trapping antioxidant that prevents lipid oxidative damage and consequently ferroptosis. Acts in parallel to GPX4 to suppress phospholipid peroxidation and ferroptosis. This anti-ferroptotic function is independent of cellular glutathione levels. Also acts as a potent radical-trapping antioxidant by mediating warfarin-resistant vitamin K reduction in the canonical vitamin K cycle: catalyzes NAD(P)H-dependent reduction of vitamin K (phylloquinone, menaquinone-4 and menadione) to hydroquinone forms. Hydroquinones act as potent radical-trapping antioxidants inhibitor of phospholipid peroxidation and ferroptosis. May play a role in mitochondrial stress signaling. Upon oxidative stress, associates with the lipid peroxidation end product 4-hydroxy-2-nonenal (HNE) forming a lipid adduct devoid of oxidoreductase activity, which then translocates from mitochondria into the nucleus triggering DNA damage and cell death.</text>
</comment>
<comment type="catalytic activity">
    <reaction evidence="2">
        <text>ubiquinone-10 + NADH + H(+) = ubiquinol-10 + NAD(+)</text>
        <dbReference type="Rhea" id="RHEA:61984"/>
        <dbReference type="ChEBI" id="CHEBI:15378"/>
        <dbReference type="ChEBI" id="CHEBI:46245"/>
        <dbReference type="ChEBI" id="CHEBI:57540"/>
        <dbReference type="ChEBI" id="CHEBI:57945"/>
        <dbReference type="ChEBI" id="CHEBI:64183"/>
    </reaction>
    <physiologicalReaction direction="left-to-right" evidence="2">
        <dbReference type="Rhea" id="RHEA:61985"/>
    </physiologicalReaction>
</comment>
<comment type="catalytic activity">
    <reaction evidence="2">
        <text>phylloquinone + NADH + H(+) = phylloquinol + NAD(+)</text>
        <dbReference type="Rhea" id="RHEA:74075"/>
        <dbReference type="ChEBI" id="CHEBI:15378"/>
        <dbReference type="ChEBI" id="CHEBI:18067"/>
        <dbReference type="ChEBI" id="CHEBI:28433"/>
        <dbReference type="ChEBI" id="CHEBI:57540"/>
        <dbReference type="ChEBI" id="CHEBI:57945"/>
    </reaction>
    <physiologicalReaction direction="left-to-right" evidence="2">
        <dbReference type="Rhea" id="RHEA:74076"/>
    </physiologicalReaction>
</comment>
<comment type="catalytic activity">
    <reaction evidence="2">
        <text>menaquinone-4 + NADH + H(+) = menaquinol-4 + NAD(+)</text>
        <dbReference type="Rhea" id="RHEA:74079"/>
        <dbReference type="ChEBI" id="CHEBI:15378"/>
        <dbReference type="ChEBI" id="CHEBI:57540"/>
        <dbReference type="ChEBI" id="CHEBI:57945"/>
        <dbReference type="ChEBI" id="CHEBI:78277"/>
        <dbReference type="ChEBI" id="CHEBI:193091"/>
    </reaction>
    <physiologicalReaction direction="left-to-right" evidence="2">
        <dbReference type="Rhea" id="RHEA:74080"/>
    </physiologicalReaction>
</comment>
<comment type="catalytic activity">
    <reaction evidence="2">
        <text>menadione + NADH + H(+) = menadiol + NAD(+)</text>
        <dbReference type="Rhea" id="RHEA:69695"/>
        <dbReference type="ChEBI" id="CHEBI:6746"/>
        <dbReference type="ChEBI" id="CHEBI:15378"/>
        <dbReference type="ChEBI" id="CHEBI:28869"/>
        <dbReference type="ChEBI" id="CHEBI:57540"/>
        <dbReference type="ChEBI" id="CHEBI:57945"/>
    </reaction>
    <physiologicalReaction direction="left-to-right" evidence="2">
        <dbReference type="Rhea" id="RHEA:69696"/>
    </physiologicalReaction>
</comment>
<comment type="cofactor">
    <cofactor evidence="2">
        <name>6-hydroxy-FAD</name>
        <dbReference type="ChEBI" id="CHEBI:60470"/>
    </cofactor>
    <text evidence="2">Binds 6-hydroxy-FAD non-covalently.</text>
</comment>
<comment type="activity regulation">
    <text evidence="1">The modification by 4-hydroxy-2-nonenal (HNE) adduction in mitochondria results in loss of the oxidoreductase activity and activation of a novel function in mitochondrial oxidative stress signaling.</text>
</comment>
<comment type="subcellular location">
    <subcellularLocation>
        <location evidence="2">Lipid droplet</location>
    </subcellularLocation>
    <subcellularLocation>
        <location evidence="2">Cell membrane</location>
        <topology evidence="4">Lipid-anchor</topology>
    </subcellularLocation>
    <subcellularLocation>
        <location evidence="2">Cytoplasm</location>
    </subcellularLocation>
    <subcellularLocation>
        <location evidence="2">Mitochondrion membrane</location>
    </subcellularLocation>
    <subcellularLocation>
        <location evidence="2">Nucleus</location>
    </subcellularLocation>
</comment>
<comment type="PTM">
    <text evidence="2">N-myristoylation at Gly-2 mediates the recruitment to lipid droplets and plasma membrane.</text>
</comment>
<comment type="PTM">
    <text evidence="2">Acetylation at Lys-167 prevents AIFM2 ubiquitination and degradation, thereby inhibiting ferroptosis. KAT2B mediates acetylation at Lys-167, while HDAC3 removes it.</text>
</comment>
<comment type="PTM">
    <text evidence="2">Ubiquitinated. AIFM2 undergoes 'Lys-29'-ubiquitination and proteasomal degradation, which is inhibited by acetylation at Lys-167.</text>
</comment>
<comment type="similarity">
    <text evidence="4">Belongs to the FAD-dependent oxidoreductase family.</text>
</comment>
<evidence type="ECO:0000250" key="1">
    <source>
        <dbReference type="UniProtKB" id="Q8BUE4"/>
    </source>
</evidence>
<evidence type="ECO:0000250" key="2">
    <source>
        <dbReference type="UniProtKB" id="Q9BRQ8"/>
    </source>
</evidence>
<evidence type="ECO:0000255" key="3"/>
<evidence type="ECO:0000305" key="4"/>